<evidence type="ECO:0000255" key="1">
    <source>
        <dbReference type="HAMAP-Rule" id="MF_01969"/>
    </source>
</evidence>
<name>KYNB_RALN1</name>
<organism>
    <name type="scientific">Ralstonia nicotianae (strain ATCC BAA-1114 / GMI1000)</name>
    <name type="common">Ralstonia solanacearum</name>
    <dbReference type="NCBI Taxonomy" id="267608"/>
    <lineage>
        <taxon>Bacteria</taxon>
        <taxon>Pseudomonadati</taxon>
        <taxon>Pseudomonadota</taxon>
        <taxon>Betaproteobacteria</taxon>
        <taxon>Burkholderiales</taxon>
        <taxon>Burkholderiaceae</taxon>
        <taxon>Ralstonia</taxon>
        <taxon>Ralstonia solanacearum species complex</taxon>
    </lineage>
</organism>
<protein>
    <recommendedName>
        <fullName evidence="1">Kynurenine formamidase</fullName>
        <shortName evidence="1">KFA</shortName>
        <shortName evidence="1">KFase</shortName>
        <ecNumber evidence="1">3.5.1.9</ecNumber>
    </recommendedName>
    <alternativeName>
        <fullName evidence="1">Arylformamidase</fullName>
    </alternativeName>
    <alternativeName>
        <fullName evidence="1">N-formylkynurenine formamidase</fullName>
        <shortName evidence="1">FKF</shortName>
    </alternativeName>
</protein>
<dbReference type="EC" id="3.5.1.9" evidence="1"/>
<dbReference type="EMBL" id="AL646052">
    <property type="protein sequence ID" value="CAD14290.1"/>
    <property type="molecule type" value="Genomic_DNA"/>
</dbReference>
<dbReference type="RefSeq" id="WP_011000714.1">
    <property type="nucleotide sequence ID" value="NC_003295.1"/>
</dbReference>
<dbReference type="SMR" id="Q8Y1D0"/>
<dbReference type="STRING" id="267608.RSc0760"/>
<dbReference type="EnsemblBacteria" id="CAD14290">
    <property type="protein sequence ID" value="CAD14290"/>
    <property type="gene ID" value="RSc0760"/>
</dbReference>
<dbReference type="KEGG" id="rso:RSc0760"/>
<dbReference type="eggNOG" id="COG1878">
    <property type="taxonomic scope" value="Bacteria"/>
</dbReference>
<dbReference type="HOGENOM" id="CLU_030671_3_1_4"/>
<dbReference type="UniPathway" id="UPA00333">
    <property type="reaction ID" value="UER00454"/>
</dbReference>
<dbReference type="Proteomes" id="UP000001436">
    <property type="component" value="Chromosome"/>
</dbReference>
<dbReference type="GO" id="GO:0004061">
    <property type="term" value="F:arylformamidase activity"/>
    <property type="evidence" value="ECO:0000250"/>
    <property type="project" value="UniProtKB"/>
</dbReference>
<dbReference type="GO" id="GO:0004328">
    <property type="term" value="F:formamidase activity"/>
    <property type="evidence" value="ECO:0007669"/>
    <property type="project" value="InterPro"/>
</dbReference>
<dbReference type="GO" id="GO:0008270">
    <property type="term" value="F:zinc ion binding"/>
    <property type="evidence" value="ECO:0007669"/>
    <property type="project" value="UniProtKB-UniRule"/>
</dbReference>
<dbReference type="GO" id="GO:0019441">
    <property type="term" value="P:L-tryptophan catabolic process to kynurenine"/>
    <property type="evidence" value="ECO:0007669"/>
    <property type="project" value="UniProtKB-UniRule"/>
</dbReference>
<dbReference type="FunFam" id="3.50.30.50:FF:000001">
    <property type="entry name" value="Kynurenine formamidase"/>
    <property type="match status" value="1"/>
</dbReference>
<dbReference type="Gene3D" id="3.50.30.50">
    <property type="entry name" value="Putative cyclase"/>
    <property type="match status" value="1"/>
</dbReference>
<dbReference type="HAMAP" id="MF_01969">
    <property type="entry name" value="KynB"/>
    <property type="match status" value="1"/>
</dbReference>
<dbReference type="InterPro" id="IPR007325">
    <property type="entry name" value="KFase/CYL"/>
</dbReference>
<dbReference type="InterPro" id="IPR037175">
    <property type="entry name" value="KFase_sf"/>
</dbReference>
<dbReference type="InterPro" id="IPR017484">
    <property type="entry name" value="Kynurenine_formamidase_bac"/>
</dbReference>
<dbReference type="NCBIfam" id="TIGR03035">
    <property type="entry name" value="trp_arylform"/>
    <property type="match status" value="1"/>
</dbReference>
<dbReference type="PANTHER" id="PTHR31118">
    <property type="entry name" value="CYCLASE-LIKE PROTEIN 2"/>
    <property type="match status" value="1"/>
</dbReference>
<dbReference type="PANTHER" id="PTHR31118:SF32">
    <property type="entry name" value="KYNURENINE FORMAMIDASE"/>
    <property type="match status" value="1"/>
</dbReference>
<dbReference type="Pfam" id="PF04199">
    <property type="entry name" value="Cyclase"/>
    <property type="match status" value="1"/>
</dbReference>
<dbReference type="SUPFAM" id="SSF102198">
    <property type="entry name" value="Putative cyclase"/>
    <property type="match status" value="1"/>
</dbReference>
<accession>Q8Y1D0</accession>
<reference key="1">
    <citation type="journal article" date="2002" name="Nature">
        <title>Genome sequence of the plant pathogen Ralstonia solanacearum.</title>
        <authorList>
            <person name="Salanoubat M."/>
            <person name="Genin S."/>
            <person name="Artiguenave F."/>
            <person name="Gouzy J."/>
            <person name="Mangenot S."/>
            <person name="Arlat M."/>
            <person name="Billault A."/>
            <person name="Brottier P."/>
            <person name="Camus J.-C."/>
            <person name="Cattolico L."/>
            <person name="Chandler M."/>
            <person name="Choisne N."/>
            <person name="Claudel-Renard C."/>
            <person name="Cunnac S."/>
            <person name="Demange N."/>
            <person name="Gaspin C."/>
            <person name="Lavie M."/>
            <person name="Moisan A."/>
            <person name="Robert C."/>
            <person name="Saurin W."/>
            <person name="Schiex T."/>
            <person name="Siguier P."/>
            <person name="Thebault P."/>
            <person name="Whalen M."/>
            <person name="Wincker P."/>
            <person name="Levy M."/>
            <person name="Weissenbach J."/>
            <person name="Boucher C.A."/>
        </authorList>
    </citation>
    <scope>NUCLEOTIDE SEQUENCE [LARGE SCALE GENOMIC DNA]</scope>
    <source>
        <strain>ATCC BAA-1114 / GMI1000</strain>
    </source>
</reference>
<proteinExistence type="inferred from homology"/>
<feature type="chain" id="PRO_0000362137" description="Kynurenine formamidase">
    <location>
        <begin position="1"/>
        <end position="209"/>
    </location>
</feature>
<feature type="active site" description="Proton donor/acceptor" evidence="1">
    <location>
        <position position="59"/>
    </location>
</feature>
<feature type="binding site" evidence="1">
    <location>
        <position position="19"/>
    </location>
    <ligand>
        <name>substrate</name>
    </ligand>
</feature>
<feature type="binding site" evidence="1">
    <location>
        <position position="49"/>
    </location>
    <ligand>
        <name>Zn(2+)</name>
        <dbReference type="ChEBI" id="CHEBI:29105"/>
        <label>1</label>
    </ligand>
</feature>
<feature type="binding site" evidence="1">
    <location>
        <position position="53"/>
    </location>
    <ligand>
        <name>Zn(2+)</name>
        <dbReference type="ChEBI" id="CHEBI:29105"/>
        <label>1</label>
    </ligand>
</feature>
<feature type="binding site" evidence="1">
    <location>
        <position position="55"/>
    </location>
    <ligand>
        <name>Zn(2+)</name>
        <dbReference type="ChEBI" id="CHEBI:29105"/>
        <label>1</label>
    </ligand>
</feature>
<feature type="binding site" evidence="1">
    <location>
        <position position="55"/>
    </location>
    <ligand>
        <name>Zn(2+)</name>
        <dbReference type="ChEBI" id="CHEBI:29105"/>
        <label>2</label>
    </ligand>
</feature>
<feature type="binding site" evidence="1">
    <location>
        <position position="160"/>
    </location>
    <ligand>
        <name>Zn(2+)</name>
        <dbReference type="ChEBI" id="CHEBI:29105"/>
        <label>2</label>
    </ligand>
</feature>
<feature type="binding site" evidence="1">
    <location>
        <position position="172"/>
    </location>
    <ligand>
        <name>Zn(2+)</name>
        <dbReference type="ChEBI" id="CHEBI:29105"/>
        <label>1</label>
    </ligand>
</feature>
<feature type="binding site" evidence="1">
    <location>
        <position position="172"/>
    </location>
    <ligand>
        <name>Zn(2+)</name>
        <dbReference type="ChEBI" id="CHEBI:29105"/>
        <label>2</label>
    </ligand>
</feature>
<comment type="function">
    <text evidence="1">Catalyzes the hydrolysis of N-formyl-L-kynurenine to L-kynurenine, the second step in the kynurenine pathway of tryptophan degradation.</text>
</comment>
<comment type="catalytic activity">
    <reaction evidence="1">
        <text>N-formyl-L-kynurenine + H2O = L-kynurenine + formate + H(+)</text>
        <dbReference type="Rhea" id="RHEA:13009"/>
        <dbReference type="ChEBI" id="CHEBI:15377"/>
        <dbReference type="ChEBI" id="CHEBI:15378"/>
        <dbReference type="ChEBI" id="CHEBI:15740"/>
        <dbReference type="ChEBI" id="CHEBI:57959"/>
        <dbReference type="ChEBI" id="CHEBI:58629"/>
        <dbReference type="EC" id="3.5.1.9"/>
    </reaction>
</comment>
<comment type="cofactor">
    <cofactor evidence="1">
        <name>Zn(2+)</name>
        <dbReference type="ChEBI" id="CHEBI:29105"/>
    </cofactor>
    <text evidence="1">Binds 2 zinc ions per subunit.</text>
</comment>
<comment type="pathway">
    <text evidence="1">Amino-acid degradation; L-tryptophan degradation via kynurenine pathway; L-kynurenine from L-tryptophan: step 2/2.</text>
</comment>
<comment type="subunit">
    <text evidence="1">Homodimer.</text>
</comment>
<comment type="similarity">
    <text evidence="1">Belongs to the Cyclase 1 superfamily. KynB family.</text>
</comment>
<keyword id="KW-0378">Hydrolase</keyword>
<keyword id="KW-0479">Metal-binding</keyword>
<keyword id="KW-1185">Reference proteome</keyword>
<keyword id="KW-0823">Tryptophan catabolism</keyword>
<keyword id="KW-0862">Zinc</keyword>
<gene>
    <name evidence="1" type="primary">kynB</name>
    <name type="ordered locus">RSc0760</name>
</gene>
<sequence length="209" mass="22347">MERTLWDISPALSTATPTWPGDTPFSQEIAWKLEGDCPVNVGRITLSPHTGAHADAPLHYHADGAPIGAVPLDAYLGPCRVIHCVGVARVEPEHVRDALDGAPPRVLLRTYARMPQNAWDDHFAAVAPETIGLLAAHGVRLIGTDTASLDPQTSKTMDAHHAVGRHGLAILEGLVLDDVPAGDYELIALPLKFATLDASPVRAVLRRLP</sequence>